<protein>
    <recommendedName>
        <fullName>Cytidylate kinase</fullName>
        <shortName>CK</shortName>
        <ecNumber>2.7.4.25</ecNumber>
    </recommendedName>
    <alternativeName>
        <fullName>Cytidine monophosphate kinase</fullName>
        <shortName>CMP kinase</shortName>
    </alternativeName>
</protein>
<gene>
    <name type="primary">cmk</name>
    <name type="ordered locus">APE_0978.1</name>
</gene>
<reference key="1">
    <citation type="journal article" date="1999" name="DNA Res.">
        <title>Complete genome sequence of an aerobic hyper-thermophilic crenarchaeon, Aeropyrum pernix K1.</title>
        <authorList>
            <person name="Kawarabayasi Y."/>
            <person name="Hino Y."/>
            <person name="Horikawa H."/>
            <person name="Yamazaki S."/>
            <person name="Haikawa Y."/>
            <person name="Jin-no K."/>
            <person name="Takahashi M."/>
            <person name="Sekine M."/>
            <person name="Baba S."/>
            <person name="Ankai A."/>
            <person name="Kosugi H."/>
            <person name="Hosoyama A."/>
            <person name="Fukui S."/>
            <person name="Nagai Y."/>
            <person name="Nishijima K."/>
            <person name="Nakazawa H."/>
            <person name="Takamiya M."/>
            <person name="Masuda S."/>
            <person name="Funahashi T."/>
            <person name="Tanaka T."/>
            <person name="Kudoh Y."/>
            <person name="Yamazaki J."/>
            <person name="Kushida N."/>
            <person name="Oguchi A."/>
            <person name="Aoki K."/>
            <person name="Kubota K."/>
            <person name="Nakamura Y."/>
            <person name="Nomura N."/>
            <person name="Sako Y."/>
            <person name="Kikuchi H."/>
        </authorList>
    </citation>
    <scope>NUCLEOTIDE SEQUENCE [LARGE SCALE GENOMIC DNA]</scope>
    <source>
        <strain>ATCC 700893 / DSM 11879 / JCM 9820 / NBRC 100138 / K1</strain>
    </source>
</reference>
<sequence>MISGPPGSGKSTYAKRLAEDLGLSYYSTGTIFRSIARERGLSLAEMSRLAEEDPRIDLEIDRRTLDVASRGGVVIDSHLAAWLLRDKAQYLVLVKAPVWVRVRRIARRDGVPLRRALAETVEREWSQRLRFKRYYGIDVSDTTIFHLTVDTSMYSVEDTYRLILEGARRRGL</sequence>
<name>KCY_AERPE</name>
<organism>
    <name type="scientific">Aeropyrum pernix (strain ATCC 700893 / DSM 11879 / JCM 9820 / NBRC 100138 / K1)</name>
    <dbReference type="NCBI Taxonomy" id="272557"/>
    <lineage>
        <taxon>Archaea</taxon>
        <taxon>Thermoproteota</taxon>
        <taxon>Thermoprotei</taxon>
        <taxon>Desulfurococcales</taxon>
        <taxon>Desulfurococcaceae</taxon>
        <taxon>Aeropyrum</taxon>
    </lineage>
</organism>
<keyword id="KW-0067">ATP-binding</keyword>
<keyword id="KW-0963">Cytoplasm</keyword>
<keyword id="KW-0418">Kinase</keyword>
<keyword id="KW-0547">Nucleotide-binding</keyword>
<keyword id="KW-1185">Reference proteome</keyword>
<keyword id="KW-0808">Transferase</keyword>
<evidence type="ECO:0000250" key="1"/>
<evidence type="ECO:0000305" key="2"/>
<accession>Q9YDD5</accession>
<comment type="catalytic activity">
    <reaction>
        <text>CMP + ATP = CDP + ADP</text>
        <dbReference type="Rhea" id="RHEA:11600"/>
        <dbReference type="ChEBI" id="CHEBI:30616"/>
        <dbReference type="ChEBI" id="CHEBI:58069"/>
        <dbReference type="ChEBI" id="CHEBI:60377"/>
        <dbReference type="ChEBI" id="CHEBI:456216"/>
        <dbReference type="EC" id="2.7.4.25"/>
    </reaction>
</comment>
<comment type="catalytic activity">
    <reaction>
        <text>dCMP + ATP = dCDP + ADP</text>
        <dbReference type="Rhea" id="RHEA:25094"/>
        <dbReference type="ChEBI" id="CHEBI:30616"/>
        <dbReference type="ChEBI" id="CHEBI:57566"/>
        <dbReference type="ChEBI" id="CHEBI:58593"/>
        <dbReference type="ChEBI" id="CHEBI:456216"/>
        <dbReference type="EC" id="2.7.4.25"/>
    </reaction>
</comment>
<comment type="subcellular location">
    <subcellularLocation>
        <location evidence="1">Cytoplasm</location>
    </subcellularLocation>
</comment>
<comment type="similarity">
    <text evidence="2">Belongs to the cytidylate kinase family. Type 2 subfamily.</text>
</comment>
<feature type="chain" id="PRO_0000132008" description="Cytidylate kinase">
    <location>
        <begin position="1"/>
        <end position="172"/>
    </location>
</feature>
<feature type="binding site" evidence="1">
    <location>
        <begin position="4"/>
        <end position="12"/>
    </location>
    <ligand>
        <name>ATP</name>
        <dbReference type="ChEBI" id="CHEBI:30616"/>
    </ligand>
</feature>
<dbReference type="EC" id="2.7.4.25"/>
<dbReference type="EMBL" id="BA000002">
    <property type="protein sequence ID" value="BAA79962.2"/>
    <property type="molecule type" value="Genomic_DNA"/>
</dbReference>
<dbReference type="PIR" id="B72695">
    <property type="entry name" value="B72695"/>
</dbReference>
<dbReference type="SMR" id="Q9YDD5"/>
<dbReference type="STRING" id="272557.APE_0978.1"/>
<dbReference type="EnsemblBacteria" id="BAA79962">
    <property type="protein sequence ID" value="BAA79962"/>
    <property type="gene ID" value="APE_0978.1"/>
</dbReference>
<dbReference type="KEGG" id="ape:APE_0978.1"/>
<dbReference type="eggNOG" id="arCOG01037">
    <property type="taxonomic scope" value="Archaea"/>
</dbReference>
<dbReference type="Proteomes" id="UP000002518">
    <property type="component" value="Chromosome"/>
</dbReference>
<dbReference type="GO" id="GO:0005737">
    <property type="term" value="C:cytoplasm"/>
    <property type="evidence" value="ECO:0007669"/>
    <property type="project" value="UniProtKB-SubCell"/>
</dbReference>
<dbReference type="GO" id="GO:0005524">
    <property type="term" value="F:ATP binding"/>
    <property type="evidence" value="ECO:0007669"/>
    <property type="project" value="UniProtKB-UniRule"/>
</dbReference>
<dbReference type="GO" id="GO:0036430">
    <property type="term" value="F:CMP kinase activity"/>
    <property type="evidence" value="ECO:0007669"/>
    <property type="project" value="RHEA"/>
</dbReference>
<dbReference type="GO" id="GO:0036431">
    <property type="term" value="F:dCMP kinase activity"/>
    <property type="evidence" value="ECO:0007669"/>
    <property type="project" value="RHEA"/>
</dbReference>
<dbReference type="GO" id="GO:0006220">
    <property type="term" value="P:pyrimidine nucleotide metabolic process"/>
    <property type="evidence" value="ECO:0007669"/>
    <property type="project" value="UniProtKB-UniRule"/>
</dbReference>
<dbReference type="CDD" id="cd02020">
    <property type="entry name" value="CMPK"/>
    <property type="match status" value="1"/>
</dbReference>
<dbReference type="Gene3D" id="3.40.50.300">
    <property type="entry name" value="P-loop containing nucleotide triphosphate hydrolases"/>
    <property type="match status" value="1"/>
</dbReference>
<dbReference type="HAMAP" id="MF_00239">
    <property type="entry name" value="Cytidyl_kinase_type2"/>
    <property type="match status" value="1"/>
</dbReference>
<dbReference type="InterPro" id="IPR011892">
    <property type="entry name" value="Cyt_kin_arch"/>
</dbReference>
<dbReference type="InterPro" id="IPR011994">
    <property type="entry name" value="Cytidylate_kinase_dom"/>
</dbReference>
<dbReference type="InterPro" id="IPR027417">
    <property type="entry name" value="P-loop_NTPase"/>
</dbReference>
<dbReference type="NCBIfam" id="TIGR02173">
    <property type="entry name" value="cyt_kin_arch"/>
    <property type="match status" value="1"/>
</dbReference>
<dbReference type="Pfam" id="PF13207">
    <property type="entry name" value="AAA_17"/>
    <property type="match status" value="1"/>
</dbReference>
<dbReference type="SUPFAM" id="SSF52540">
    <property type="entry name" value="P-loop containing nucleoside triphosphate hydrolases"/>
    <property type="match status" value="1"/>
</dbReference>
<proteinExistence type="inferred from homology"/>